<accession>P39416</accession>
<accession>P39417</accession>
<protein>
    <recommendedName>
        <fullName>Uncharacterized 19.7 kDa protein in motB-dexA intergenic region</fullName>
    </recommendedName>
</protein>
<gene>
    <name type="primary">y00F</name>
    <name type="synonym">dexA.-1</name>
    <name type="synonym">motB.2</name>
</gene>
<reference key="1">
    <citation type="submission" date="1996-11" db="EMBL/GenBank/DDBJ databases">
        <title>Two new orfs between dexA and motB in bacteriophage T4.</title>
        <authorList>
            <person name="Uzan M."/>
            <person name="Spicer E."/>
            <person name="White T."/>
            <person name="Kutter E.M."/>
        </authorList>
    </citation>
    <scope>NUCLEOTIDE SEQUENCE [GENOMIC DNA]</scope>
</reference>
<reference key="2">
    <citation type="journal article" date="2003" name="Microbiol. Mol. Biol. Rev.">
        <title>Bacteriophage T4 genome.</title>
        <authorList>
            <person name="Miller E.S."/>
            <person name="Kutter E."/>
            <person name="Mosig G."/>
            <person name="Arisaka F."/>
            <person name="Kunisawa T."/>
            <person name="Ruger W."/>
        </authorList>
    </citation>
    <scope>NUCLEOTIDE SEQUENCE [LARGE SCALE GENOMIC DNA]</scope>
</reference>
<organism>
    <name type="scientific">Enterobacteria phage T4</name>
    <name type="common">Bacteriophage T4</name>
    <dbReference type="NCBI Taxonomy" id="10665"/>
    <lineage>
        <taxon>Viruses</taxon>
        <taxon>Duplodnaviria</taxon>
        <taxon>Heunggongvirae</taxon>
        <taxon>Uroviricota</taxon>
        <taxon>Caudoviricetes</taxon>
        <taxon>Straboviridae</taxon>
        <taxon>Tevenvirinae</taxon>
        <taxon>Tequatrovirus</taxon>
    </lineage>
</organism>
<name>Y00F_BPT4</name>
<feature type="chain" id="PRO_0000165081" description="Uncharacterized 19.7 kDa protein in motB-dexA intergenic region">
    <location>
        <begin position="1"/>
        <end position="166"/>
    </location>
</feature>
<organismHost>
    <name type="scientific">Escherichia coli</name>
    <dbReference type="NCBI Taxonomy" id="562"/>
</organismHost>
<proteinExistence type="predicted"/>
<keyword id="KW-1185">Reference proteome</keyword>
<dbReference type="EMBL" id="U76613">
    <property type="protein sequence ID" value="AAB26982.1"/>
    <property type="molecule type" value="Genomic_DNA"/>
</dbReference>
<dbReference type="EMBL" id="AF158101">
    <property type="protein sequence ID" value="AAD42611.1"/>
    <property type="molecule type" value="Genomic_DNA"/>
</dbReference>
<dbReference type="RefSeq" id="NP_049628.1">
    <property type="nucleotide sequence ID" value="NC_000866.4"/>
</dbReference>
<dbReference type="GeneID" id="1258758"/>
<dbReference type="KEGG" id="vg:1258758"/>
<dbReference type="OrthoDB" id="12667at10239"/>
<dbReference type="Proteomes" id="UP000009087">
    <property type="component" value="Segment"/>
</dbReference>
<sequence>MKIYRVESSFSILNYEDAITIRRDLCVQITPYRSIIDSWSEEWLLHVGYDRPNFMHHSNDNKRIPVPHEDKLLVKNANIVINTKFKKDYVGVEYHIPGWFVALYHFAFASEYDMMKWFTREEREELASKGFYLAVYEVPDDQVIIGGHQVMFRKSYAELKGFITLN</sequence>